<gene>
    <name evidence="1" type="primary">dut</name>
    <name type="ordered locus">Cvib_1236</name>
</gene>
<feature type="chain" id="PRO_1000076065" description="Deoxyuridine 5'-triphosphate nucleotidohydrolase">
    <location>
        <begin position="1"/>
        <end position="148"/>
    </location>
</feature>
<feature type="binding site" evidence="1">
    <location>
        <begin position="65"/>
        <end position="67"/>
    </location>
    <ligand>
        <name>substrate</name>
    </ligand>
</feature>
<feature type="binding site" evidence="1">
    <location>
        <position position="78"/>
    </location>
    <ligand>
        <name>substrate</name>
    </ligand>
</feature>
<feature type="binding site" evidence="1">
    <location>
        <begin position="82"/>
        <end position="84"/>
    </location>
    <ligand>
        <name>substrate</name>
    </ligand>
</feature>
<feature type="binding site" evidence="1">
    <location>
        <position position="92"/>
    </location>
    <ligand>
        <name>substrate</name>
    </ligand>
</feature>
<keyword id="KW-0378">Hydrolase</keyword>
<keyword id="KW-0460">Magnesium</keyword>
<keyword id="KW-0479">Metal-binding</keyword>
<keyword id="KW-0546">Nucleotide metabolism</keyword>
<evidence type="ECO:0000255" key="1">
    <source>
        <dbReference type="HAMAP-Rule" id="MF_00116"/>
    </source>
</evidence>
<proteinExistence type="inferred from homology"/>
<reference key="1">
    <citation type="submission" date="2007-03" db="EMBL/GenBank/DDBJ databases">
        <title>Complete sequence of Prosthecochloris vibrioformis DSM 265.</title>
        <authorList>
            <consortium name="US DOE Joint Genome Institute"/>
            <person name="Copeland A."/>
            <person name="Lucas S."/>
            <person name="Lapidus A."/>
            <person name="Barry K."/>
            <person name="Detter J.C."/>
            <person name="Glavina del Rio T."/>
            <person name="Hammon N."/>
            <person name="Israni S."/>
            <person name="Pitluck S."/>
            <person name="Schmutz J."/>
            <person name="Larimer F."/>
            <person name="Land M."/>
            <person name="Hauser L."/>
            <person name="Mikhailova N."/>
            <person name="Li T."/>
            <person name="Overmann J."/>
            <person name="Schuster S.C."/>
            <person name="Bryant D.A."/>
            <person name="Richardson P."/>
        </authorList>
    </citation>
    <scope>NUCLEOTIDE SEQUENCE [LARGE SCALE GENOMIC DNA]</scope>
    <source>
        <strain>DSM 265 / 1930</strain>
    </source>
</reference>
<organism>
    <name type="scientific">Chlorobium phaeovibrioides (strain DSM 265 / 1930)</name>
    <name type="common">Prosthecochloris vibrioformis (strain DSM 265)</name>
    <dbReference type="NCBI Taxonomy" id="290318"/>
    <lineage>
        <taxon>Bacteria</taxon>
        <taxon>Pseudomonadati</taxon>
        <taxon>Chlorobiota</taxon>
        <taxon>Chlorobiia</taxon>
        <taxon>Chlorobiales</taxon>
        <taxon>Chlorobiaceae</taxon>
        <taxon>Chlorobium/Pelodictyon group</taxon>
        <taxon>Chlorobium</taxon>
    </lineage>
</organism>
<name>DUT_CHLPM</name>
<comment type="function">
    <text evidence="1">This enzyme is involved in nucleotide metabolism: it produces dUMP, the immediate precursor of thymidine nucleotides and it decreases the intracellular concentration of dUTP so that uracil cannot be incorporated into DNA.</text>
</comment>
<comment type="catalytic activity">
    <reaction evidence="1">
        <text>dUTP + H2O = dUMP + diphosphate + H(+)</text>
        <dbReference type="Rhea" id="RHEA:10248"/>
        <dbReference type="ChEBI" id="CHEBI:15377"/>
        <dbReference type="ChEBI" id="CHEBI:15378"/>
        <dbReference type="ChEBI" id="CHEBI:33019"/>
        <dbReference type="ChEBI" id="CHEBI:61555"/>
        <dbReference type="ChEBI" id="CHEBI:246422"/>
        <dbReference type="EC" id="3.6.1.23"/>
    </reaction>
</comment>
<comment type="cofactor">
    <cofactor evidence="1">
        <name>Mg(2+)</name>
        <dbReference type="ChEBI" id="CHEBI:18420"/>
    </cofactor>
</comment>
<comment type="pathway">
    <text evidence="1">Pyrimidine metabolism; dUMP biosynthesis; dUMP from dCTP (dUTP route): step 2/2.</text>
</comment>
<comment type="similarity">
    <text evidence="1">Belongs to the dUTPase family.</text>
</comment>
<protein>
    <recommendedName>
        <fullName evidence="1">Deoxyuridine 5'-triphosphate nucleotidohydrolase</fullName>
        <shortName evidence="1">dUTPase</shortName>
        <ecNumber evidence="1">3.6.1.23</ecNumber>
    </recommendedName>
    <alternativeName>
        <fullName evidence="1">dUTP pyrophosphatase</fullName>
    </alternativeName>
</protein>
<sequence length="148" mass="15936">MLKVKIVRLNKQAFLPVYATAHAAGMDVSACLEEPVVVEPFSTALIPAGFAIELPIGYEMQLRPRSGLALRSMITLANSPATIDADYRGEVKVILINHGPQPFTVNNGDRIAQMVVARVEEVSFEEVSELGETVRGDGGFGHTGTVRS</sequence>
<dbReference type="EC" id="3.6.1.23" evidence="1"/>
<dbReference type="EMBL" id="CP000607">
    <property type="protein sequence ID" value="ABP37248.1"/>
    <property type="molecule type" value="Genomic_DNA"/>
</dbReference>
<dbReference type="SMR" id="A4SFI9"/>
<dbReference type="STRING" id="290318.Cvib_1236"/>
<dbReference type="KEGG" id="pvi:Cvib_1236"/>
<dbReference type="eggNOG" id="COG0756">
    <property type="taxonomic scope" value="Bacteria"/>
</dbReference>
<dbReference type="HOGENOM" id="CLU_068508_1_2_10"/>
<dbReference type="OrthoDB" id="9809956at2"/>
<dbReference type="UniPathway" id="UPA00610">
    <property type="reaction ID" value="UER00666"/>
</dbReference>
<dbReference type="GO" id="GO:0004170">
    <property type="term" value="F:dUTP diphosphatase activity"/>
    <property type="evidence" value="ECO:0007669"/>
    <property type="project" value="UniProtKB-UniRule"/>
</dbReference>
<dbReference type="GO" id="GO:0000287">
    <property type="term" value="F:magnesium ion binding"/>
    <property type="evidence" value="ECO:0007669"/>
    <property type="project" value="UniProtKB-UniRule"/>
</dbReference>
<dbReference type="GO" id="GO:0006226">
    <property type="term" value="P:dUMP biosynthetic process"/>
    <property type="evidence" value="ECO:0007669"/>
    <property type="project" value="UniProtKB-UniRule"/>
</dbReference>
<dbReference type="GO" id="GO:0046081">
    <property type="term" value="P:dUTP catabolic process"/>
    <property type="evidence" value="ECO:0007669"/>
    <property type="project" value="InterPro"/>
</dbReference>
<dbReference type="CDD" id="cd07557">
    <property type="entry name" value="trimeric_dUTPase"/>
    <property type="match status" value="1"/>
</dbReference>
<dbReference type="Gene3D" id="2.70.40.10">
    <property type="match status" value="1"/>
</dbReference>
<dbReference type="HAMAP" id="MF_00116">
    <property type="entry name" value="dUTPase_bact"/>
    <property type="match status" value="1"/>
</dbReference>
<dbReference type="InterPro" id="IPR008181">
    <property type="entry name" value="dUTPase"/>
</dbReference>
<dbReference type="InterPro" id="IPR029054">
    <property type="entry name" value="dUTPase-like"/>
</dbReference>
<dbReference type="InterPro" id="IPR036157">
    <property type="entry name" value="dUTPase-like_sf"/>
</dbReference>
<dbReference type="InterPro" id="IPR033704">
    <property type="entry name" value="dUTPase_trimeric"/>
</dbReference>
<dbReference type="NCBIfam" id="TIGR00576">
    <property type="entry name" value="dut"/>
    <property type="match status" value="1"/>
</dbReference>
<dbReference type="NCBIfam" id="NF001862">
    <property type="entry name" value="PRK00601.1"/>
    <property type="match status" value="1"/>
</dbReference>
<dbReference type="PANTHER" id="PTHR11241">
    <property type="entry name" value="DEOXYURIDINE 5'-TRIPHOSPHATE NUCLEOTIDOHYDROLASE"/>
    <property type="match status" value="1"/>
</dbReference>
<dbReference type="PANTHER" id="PTHR11241:SF0">
    <property type="entry name" value="DEOXYURIDINE 5'-TRIPHOSPHATE NUCLEOTIDOHYDROLASE"/>
    <property type="match status" value="1"/>
</dbReference>
<dbReference type="Pfam" id="PF00692">
    <property type="entry name" value="dUTPase"/>
    <property type="match status" value="1"/>
</dbReference>
<dbReference type="SUPFAM" id="SSF51283">
    <property type="entry name" value="dUTPase-like"/>
    <property type="match status" value="1"/>
</dbReference>
<accession>A4SFI9</accession>